<evidence type="ECO:0000255" key="1">
    <source>
        <dbReference type="HAMAP-Rule" id="MF_01569"/>
    </source>
</evidence>
<comment type="function">
    <text evidence="1">Catalyzes the attachment of proline to tRNA(Pro) in a two-step reaction: proline is first activated by ATP to form Pro-AMP and then transferred to the acceptor end of tRNA(Pro). As ProRS can inadvertently accommodate and process non-cognate amino acids such as alanine and cysteine, to avoid such errors it has two additional distinct editing activities against alanine. One activity is designated as 'pretransfer' editing and involves the tRNA(Pro)-independent hydrolysis of activated Ala-AMP. The other activity is designated 'posttransfer' editing and involves deacylation of mischarged Ala-tRNA(Pro). The misacylated Cys-tRNA(Pro) is not edited by ProRS.</text>
</comment>
<comment type="catalytic activity">
    <reaction evidence="1">
        <text>tRNA(Pro) + L-proline + ATP = L-prolyl-tRNA(Pro) + AMP + diphosphate</text>
        <dbReference type="Rhea" id="RHEA:14305"/>
        <dbReference type="Rhea" id="RHEA-COMP:9700"/>
        <dbReference type="Rhea" id="RHEA-COMP:9702"/>
        <dbReference type="ChEBI" id="CHEBI:30616"/>
        <dbReference type="ChEBI" id="CHEBI:33019"/>
        <dbReference type="ChEBI" id="CHEBI:60039"/>
        <dbReference type="ChEBI" id="CHEBI:78442"/>
        <dbReference type="ChEBI" id="CHEBI:78532"/>
        <dbReference type="ChEBI" id="CHEBI:456215"/>
        <dbReference type="EC" id="6.1.1.15"/>
    </reaction>
</comment>
<comment type="subunit">
    <text evidence="1">Homodimer.</text>
</comment>
<comment type="subcellular location">
    <subcellularLocation>
        <location evidence="1">Cytoplasm</location>
    </subcellularLocation>
</comment>
<comment type="domain">
    <text evidence="1">Consists of three domains: the N-terminal catalytic domain, the editing domain and the C-terminal anticodon-binding domain.</text>
</comment>
<comment type="similarity">
    <text evidence="1">Belongs to the class-II aminoacyl-tRNA synthetase family. ProS type 1 subfamily.</text>
</comment>
<accession>A0RNT1</accession>
<feature type="chain" id="PRO_0000288318" description="Proline--tRNA ligase">
    <location>
        <begin position="1"/>
        <end position="567"/>
    </location>
</feature>
<keyword id="KW-0030">Aminoacyl-tRNA synthetase</keyword>
<keyword id="KW-0067">ATP-binding</keyword>
<keyword id="KW-0963">Cytoplasm</keyword>
<keyword id="KW-0436">Ligase</keyword>
<keyword id="KW-0547">Nucleotide-binding</keyword>
<keyword id="KW-0648">Protein biosynthesis</keyword>
<sequence length="567" mass="63447">MKFTKLYVPTTKEAPKDATLPSHQFLIRAGFVAQIGSGLYNFLPLGKRVLRKVENIVRDEMDKAGANEVALSFVVPGELWKQSRRYFKFGKELLRLKDRKDNDFLLAPTHEESIVDLVRDKVTSYKQLPLHLYQIGLKFRDEARPRFGLLRCREFIMKDGYSFHASEADLKREFDLMETTYTKIFSRLGLNFRAVEADSGAIGGSGSKEFMVLAKNGEDDILISDASNYAANIEAAKRAKRVCKAERPQSNSMQKFFTPGCSSIAKVTEFFKVDPFYTIKAVMKKAIYEDSEKIVVFFVRGDDELQEVKACNACSALELSDASEEEVIAAGLVPGYCGPVGLHENIDFYIDNELENEKEMICGANEKDYHAIGVNIINFNKDRFKDLAEVKAGDKALDGGVLSVTKGIEVGHIFQLGVRYSETMGATFLDENGKSKPFFMGCYGIGVSRLVAVMVEASHDEKGCIWKKECAPFMVHIIVSNIKDTEQMQFALNLESNLESSGVEVLLDDRNERFGVKMADFELIGVPFGVVVGKGLQNAEVEFIKRDGLEKVKVSSDEILGKLKEII</sequence>
<proteinExistence type="inferred from homology"/>
<reference key="1">
    <citation type="submission" date="2006-11" db="EMBL/GenBank/DDBJ databases">
        <title>Sequence of Campylobacter fetus subsp. fetus 82-40.</title>
        <authorList>
            <person name="Fouts D.E."/>
            <person name="Nelson K.E."/>
        </authorList>
    </citation>
    <scope>NUCLEOTIDE SEQUENCE [LARGE SCALE GENOMIC DNA]</scope>
    <source>
        <strain>82-40</strain>
    </source>
</reference>
<gene>
    <name evidence="1" type="primary">proS</name>
    <name type="ordered locus">CFF8240_0689</name>
</gene>
<dbReference type="EC" id="6.1.1.15" evidence="1"/>
<dbReference type="EMBL" id="CP000487">
    <property type="protein sequence ID" value="ABK81897.1"/>
    <property type="molecule type" value="Genomic_DNA"/>
</dbReference>
<dbReference type="RefSeq" id="WP_002849093.1">
    <property type="nucleotide sequence ID" value="NC_008599.1"/>
</dbReference>
<dbReference type="SMR" id="A0RNT1"/>
<dbReference type="KEGG" id="cff:CFF8240_0689"/>
<dbReference type="eggNOG" id="COG0442">
    <property type="taxonomic scope" value="Bacteria"/>
</dbReference>
<dbReference type="HOGENOM" id="CLU_016739_0_0_7"/>
<dbReference type="Proteomes" id="UP000000760">
    <property type="component" value="Chromosome"/>
</dbReference>
<dbReference type="GO" id="GO:0005829">
    <property type="term" value="C:cytosol"/>
    <property type="evidence" value="ECO:0007669"/>
    <property type="project" value="TreeGrafter"/>
</dbReference>
<dbReference type="GO" id="GO:0002161">
    <property type="term" value="F:aminoacyl-tRNA deacylase activity"/>
    <property type="evidence" value="ECO:0007669"/>
    <property type="project" value="InterPro"/>
</dbReference>
<dbReference type="GO" id="GO:0005524">
    <property type="term" value="F:ATP binding"/>
    <property type="evidence" value="ECO:0007669"/>
    <property type="project" value="UniProtKB-UniRule"/>
</dbReference>
<dbReference type="GO" id="GO:0004827">
    <property type="term" value="F:proline-tRNA ligase activity"/>
    <property type="evidence" value="ECO:0007669"/>
    <property type="project" value="UniProtKB-UniRule"/>
</dbReference>
<dbReference type="GO" id="GO:0006433">
    <property type="term" value="P:prolyl-tRNA aminoacylation"/>
    <property type="evidence" value="ECO:0007669"/>
    <property type="project" value="UniProtKB-UniRule"/>
</dbReference>
<dbReference type="CDD" id="cd04334">
    <property type="entry name" value="ProRS-INS"/>
    <property type="match status" value="1"/>
</dbReference>
<dbReference type="CDD" id="cd00861">
    <property type="entry name" value="ProRS_anticodon_short"/>
    <property type="match status" value="1"/>
</dbReference>
<dbReference type="CDD" id="cd00779">
    <property type="entry name" value="ProRS_core_prok"/>
    <property type="match status" value="1"/>
</dbReference>
<dbReference type="FunFam" id="3.30.930.10:FF:000066">
    <property type="entry name" value="Proline--tRNA ligase"/>
    <property type="match status" value="1"/>
</dbReference>
<dbReference type="Gene3D" id="3.40.50.800">
    <property type="entry name" value="Anticodon-binding domain"/>
    <property type="match status" value="1"/>
</dbReference>
<dbReference type="Gene3D" id="3.30.930.10">
    <property type="entry name" value="Bira Bifunctional Protein, Domain 2"/>
    <property type="match status" value="2"/>
</dbReference>
<dbReference type="HAMAP" id="MF_01569">
    <property type="entry name" value="Pro_tRNA_synth_type1"/>
    <property type="match status" value="1"/>
</dbReference>
<dbReference type="InterPro" id="IPR002314">
    <property type="entry name" value="aa-tRNA-synt_IIb"/>
</dbReference>
<dbReference type="InterPro" id="IPR006195">
    <property type="entry name" value="aa-tRNA-synth_II"/>
</dbReference>
<dbReference type="InterPro" id="IPR045864">
    <property type="entry name" value="aa-tRNA-synth_II/BPL/LPL"/>
</dbReference>
<dbReference type="InterPro" id="IPR004154">
    <property type="entry name" value="Anticodon-bd"/>
</dbReference>
<dbReference type="InterPro" id="IPR036621">
    <property type="entry name" value="Anticodon-bd_dom_sf"/>
</dbReference>
<dbReference type="InterPro" id="IPR002316">
    <property type="entry name" value="Pro-tRNA-ligase_IIa"/>
</dbReference>
<dbReference type="InterPro" id="IPR004500">
    <property type="entry name" value="Pro-tRNA-synth_IIa_bac-type"/>
</dbReference>
<dbReference type="InterPro" id="IPR023717">
    <property type="entry name" value="Pro-tRNA-Synthase_IIa_type1"/>
</dbReference>
<dbReference type="InterPro" id="IPR050062">
    <property type="entry name" value="Pro-tRNA_synthetase"/>
</dbReference>
<dbReference type="InterPro" id="IPR044140">
    <property type="entry name" value="ProRS_anticodon_short"/>
</dbReference>
<dbReference type="InterPro" id="IPR033730">
    <property type="entry name" value="ProRS_core_prok"/>
</dbReference>
<dbReference type="InterPro" id="IPR036754">
    <property type="entry name" value="YbaK/aa-tRNA-synt-asso_dom_sf"/>
</dbReference>
<dbReference type="InterPro" id="IPR007214">
    <property type="entry name" value="YbaK/aa-tRNA-synth-assoc-dom"/>
</dbReference>
<dbReference type="NCBIfam" id="NF006625">
    <property type="entry name" value="PRK09194.1"/>
    <property type="match status" value="1"/>
</dbReference>
<dbReference type="NCBIfam" id="TIGR00409">
    <property type="entry name" value="proS_fam_II"/>
    <property type="match status" value="1"/>
</dbReference>
<dbReference type="PANTHER" id="PTHR42753">
    <property type="entry name" value="MITOCHONDRIAL RIBOSOME PROTEIN L39/PROLYL-TRNA LIGASE FAMILY MEMBER"/>
    <property type="match status" value="1"/>
</dbReference>
<dbReference type="PANTHER" id="PTHR42753:SF2">
    <property type="entry name" value="PROLINE--TRNA LIGASE"/>
    <property type="match status" value="1"/>
</dbReference>
<dbReference type="Pfam" id="PF03129">
    <property type="entry name" value="HGTP_anticodon"/>
    <property type="match status" value="1"/>
</dbReference>
<dbReference type="Pfam" id="PF00587">
    <property type="entry name" value="tRNA-synt_2b"/>
    <property type="match status" value="1"/>
</dbReference>
<dbReference type="Pfam" id="PF04073">
    <property type="entry name" value="tRNA_edit"/>
    <property type="match status" value="1"/>
</dbReference>
<dbReference type="PRINTS" id="PR01046">
    <property type="entry name" value="TRNASYNTHPRO"/>
</dbReference>
<dbReference type="SUPFAM" id="SSF52954">
    <property type="entry name" value="Class II aaRS ABD-related"/>
    <property type="match status" value="1"/>
</dbReference>
<dbReference type="SUPFAM" id="SSF55681">
    <property type="entry name" value="Class II aaRS and biotin synthetases"/>
    <property type="match status" value="1"/>
</dbReference>
<dbReference type="SUPFAM" id="SSF55826">
    <property type="entry name" value="YbaK/ProRS associated domain"/>
    <property type="match status" value="1"/>
</dbReference>
<dbReference type="PROSITE" id="PS50862">
    <property type="entry name" value="AA_TRNA_LIGASE_II"/>
    <property type="match status" value="1"/>
</dbReference>
<name>SYP_CAMFF</name>
<protein>
    <recommendedName>
        <fullName evidence="1">Proline--tRNA ligase</fullName>
        <ecNumber evidence="1">6.1.1.15</ecNumber>
    </recommendedName>
    <alternativeName>
        <fullName evidence="1">Prolyl-tRNA synthetase</fullName>
        <shortName evidence="1">ProRS</shortName>
    </alternativeName>
</protein>
<organism>
    <name type="scientific">Campylobacter fetus subsp. fetus (strain 82-40)</name>
    <dbReference type="NCBI Taxonomy" id="360106"/>
    <lineage>
        <taxon>Bacteria</taxon>
        <taxon>Pseudomonadati</taxon>
        <taxon>Campylobacterota</taxon>
        <taxon>Epsilonproteobacteria</taxon>
        <taxon>Campylobacterales</taxon>
        <taxon>Campylobacteraceae</taxon>
        <taxon>Campylobacter</taxon>
    </lineage>
</organism>